<sequence length="104" mass="11737">MQTSRISSFFRGLVHLYRWAISPFLGAPCRFFPTCSEYALVALKKHPLRKSLFLIAKRLLKCGPWCIGGIDLVPRTSVEEYLSSPTPLAESPDDRTVPHTQETS</sequence>
<keyword id="KW-0997">Cell inner membrane</keyword>
<keyword id="KW-1003">Cell membrane</keyword>
<keyword id="KW-0472">Membrane</keyword>
<dbReference type="EMBL" id="AM884177">
    <property type="protein sequence ID" value="CAP07126.1"/>
    <property type="molecule type" value="Genomic_DNA"/>
</dbReference>
<dbReference type="KEGG" id="ctl:CTLon_0729"/>
<dbReference type="HOGENOM" id="CLU_144811_2_1_0"/>
<dbReference type="Proteomes" id="UP001154401">
    <property type="component" value="Chromosome"/>
</dbReference>
<dbReference type="GO" id="GO:0005886">
    <property type="term" value="C:plasma membrane"/>
    <property type="evidence" value="ECO:0007669"/>
    <property type="project" value="UniProtKB-SubCell"/>
</dbReference>
<dbReference type="HAMAP" id="MF_00386">
    <property type="entry name" value="UPF0161_YidD"/>
    <property type="match status" value="1"/>
</dbReference>
<dbReference type="InterPro" id="IPR002696">
    <property type="entry name" value="Membr_insert_effic_factor_YidD"/>
</dbReference>
<dbReference type="NCBIfam" id="TIGR00278">
    <property type="entry name" value="membrane protein insertion efficiency factor YidD"/>
    <property type="match status" value="1"/>
</dbReference>
<dbReference type="PANTHER" id="PTHR33383">
    <property type="entry name" value="MEMBRANE PROTEIN INSERTION EFFICIENCY FACTOR-RELATED"/>
    <property type="match status" value="1"/>
</dbReference>
<dbReference type="PANTHER" id="PTHR33383:SF1">
    <property type="entry name" value="MEMBRANE PROTEIN INSERTION EFFICIENCY FACTOR-RELATED"/>
    <property type="match status" value="1"/>
</dbReference>
<dbReference type="Pfam" id="PF01809">
    <property type="entry name" value="YidD"/>
    <property type="match status" value="1"/>
</dbReference>
<dbReference type="SMART" id="SM01234">
    <property type="entry name" value="Haemolytic"/>
    <property type="match status" value="1"/>
</dbReference>
<name>YIDD_CHLTB</name>
<comment type="function">
    <text evidence="1">Could be involved in insertion of integral membrane proteins into the membrane.</text>
</comment>
<comment type="subcellular location">
    <subcellularLocation>
        <location evidence="1">Cell inner membrane</location>
        <topology evidence="1">Peripheral membrane protein</topology>
        <orientation evidence="1">Cytoplasmic side</orientation>
    </subcellularLocation>
</comment>
<comment type="similarity">
    <text evidence="1">Belongs to the UPF0161 family.</text>
</comment>
<reference key="1">
    <citation type="journal article" date="2008" name="Genome Res.">
        <title>Chlamydia trachomatis: genome sequence analysis of lymphogranuloma venereum isolates.</title>
        <authorList>
            <person name="Thomson N.R."/>
            <person name="Holden M.T.G."/>
            <person name="Carder C."/>
            <person name="Lennard N."/>
            <person name="Lockey S.J."/>
            <person name="Marsh P."/>
            <person name="Skipp P."/>
            <person name="O'Connor C.D."/>
            <person name="Goodhead I."/>
            <person name="Norbertzcak H."/>
            <person name="Harris B."/>
            <person name="Ormond D."/>
            <person name="Rance R."/>
            <person name="Quail M.A."/>
            <person name="Parkhill J."/>
            <person name="Stephens R.S."/>
            <person name="Clarke I.N."/>
        </authorList>
    </citation>
    <scope>NUCLEOTIDE SEQUENCE [LARGE SCALE GENOMIC DNA]</scope>
    <source>
        <strain>UCH-1/proctitis</strain>
    </source>
</reference>
<evidence type="ECO:0000255" key="1">
    <source>
        <dbReference type="HAMAP-Rule" id="MF_00386"/>
    </source>
</evidence>
<evidence type="ECO:0000256" key="2">
    <source>
        <dbReference type="SAM" id="MobiDB-lite"/>
    </source>
</evidence>
<feature type="chain" id="PRO_1000122628" description="Putative membrane protein insertion efficiency factor">
    <location>
        <begin position="1"/>
        <end position="104"/>
    </location>
</feature>
<feature type="region of interest" description="Disordered" evidence="2">
    <location>
        <begin position="83"/>
        <end position="104"/>
    </location>
</feature>
<organism>
    <name type="scientific">Chlamydia trachomatis serovar L2b (strain UCH-1/proctitis)</name>
    <dbReference type="NCBI Taxonomy" id="471473"/>
    <lineage>
        <taxon>Bacteria</taxon>
        <taxon>Pseudomonadati</taxon>
        <taxon>Chlamydiota</taxon>
        <taxon>Chlamydiia</taxon>
        <taxon>Chlamydiales</taxon>
        <taxon>Chlamydiaceae</taxon>
        <taxon>Chlamydia/Chlamydophila group</taxon>
        <taxon>Chlamydia</taxon>
    </lineage>
</organism>
<proteinExistence type="inferred from homology"/>
<protein>
    <recommendedName>
        <fullName evidence="1">Putative membrane protein insertion efficiency factor</fullName>
    </recommendedName>
</protein>
<accession>B0BCB1</accession>
<gene>
    <name type="ordered locus">CTLon_0729</name>
</gene>